<reference key="1">
    <citation type="journal article" date="2005" name="Science">
        <title>The transcriptional landscape of the mammalian genome.</title>
        <authorList>
            <person name="Carninci P."/>
            <person name="Kasukawa T."/>
            <person name="Katayama S."/>
            <person name="Gough J."/>
            <person name="Frith M.C."/>
            <person name="Maeda N."/>
            <person name="Oyama R."/>
            <person name="Ravasi T."/>
            <person name="Lenhard B."/>
            <person name="Wells C."/>
            <person name="Kodzius R."/>
            <person name="Shimokawa K."/>
            <person name="Bajic V.B."/>
            <person name="Brenner S.E."/>
            <person name="Batalov S."/>
            <person name="Forrest A.R."/>
            <person name="Zavolan M."/>
            <person name="Davis M.J."/>
            <person name="Wilming L.G."/>
            <person name="Aidinis V."/>
            <person name="Allen J.E."/>
            <person name="Ambesi-Impiombato A."/>
            <person name="Apweiler R."/>
            <person name="Aturaliya R.N."/>
            <person name="Bailey T.L."/>
            <person name="Bansal M."/>
            <person name="Baxter L."/>
            <person name="Beisel K.W."/>
            <person name="Bersano T."/>
            <person name="Bono H."/>
            <person name="Chalk A.M."/>
            <person name="Chiu K.P."/>
            <person name="Choudhary V."/>
            <person name="Christoffels A."/>
            <person name="Clutterbuck D.R."/>
            <person name="Crowe M.L."/>
            <person name="Dalla E."/>
            <person name="Dalrymple B.P."/>
            <person name="de Bono B."/>
            <person name="Della Gatta G."/>
            <person name="di Bernardo D."/>
            <person name="Down T."/>
            <person name="Engstrom P."/>
            <person name="Fagiolini M."/>
            <person name="Faulkner G."/>
            <person name="Fletcher C.F."/>
            <person name="Fukushima T."/>
            <person name="Furuno M."/>
            <person name="Futaki S."/>
            <person name="Gariboldi M."/>
            <person name="Georgii-Hemming P."/>
            <person name="Gingeras T.R."/>
            <person name="Gojobori T."/>
            <person name="Green R.E."/>
            <person name="Gustincich S."/>
            <person name="Harbers M."/>
            <person name="Hayashi Y."/>
            <person name="Hensch T.K."/>
            <person name="Hirokawa N."/>
            <person name="Hill D."/>
            <person name="Huminiecki L."/>
            <person name="Iacono M."/>
            <person name="Ikeo K."/>
            <person name="Iwama A."/>
            <person name="Ishikawa T."/>
            <person name="Jakt M."/>
            <person name="Kanapin A."/>
            <person name="Katoh M."/>
            <person name="Kawasawa Y."/>
            <person name="Kelso J."/>
            <person name="Kitamura H."/>
            <person name="Kitano H."/>
            <person name="Kollias G."/>
            <person name="Krishnan S.P."/>
            <person name="Kruger A."/>
            <person name="Kummerfeld S.K."/>
            <person name="Kurochkin I.V."/>
            <person name="Lareau L.F."/>
            <person name="Lazarevic D."/>
            <person name="Lipovich L."/>
            <person name="Liu J."/>
            <person name="Liuni S."/>
            <person name="McWilliam S."/>
            <person name="Madan Babu M."/>
            <person name="Madera M."/>
            <person name="Marchionni L."/>
            <person name="Matsuda H."/>
            <person name="Matsuzawa S."/>
            <person name="Miki H."/>
            <person name="Mignone F."/>
            <person name="Miyake S."/>
            <person name="Morris K."/>
            <person name="Mottagui-Tabar S."/>
            <person name="Mulder N."/>
            <person name="Nakano N."/>
            <person name="Nakauchi H."/>
            <person name="Ng P."/>
            <person name="Nilsson R."/>
            <person name="Nishiguchi S."/>
            <person name="Nishikawa S."/>
            <person name="Nori F."/>
            <person name="Ohara O."/>
            <person name="Okazaki Y."/>
            <person name="Orlando V."/>
            <person name="Pang K.C."/>
            <person name="Pavan W.J."/>
            <person name="Pavesi G."/>
            <person name="Pesole G."/>
            <person name="Petrovsky N."/>
            <person name="Piazza S."/>
            <person name="Reed J."/>
            <person name="Reid J.F."/>
            <person name="Ring B.Z."/>
            <person name="Ringwald M."/>
            <person name="Rost B."/>
            <person name="Ruan Y."/>
            <person name="Salzberg S.L."/>
            <person name="Sandelin A."/>
            <person name="Schneider C."/>
            <person name="Schoenbach C."/>
            <person name="Sekiguchi K."/>
            <person name="Semple C.A."/>
            <person name="Seno S."/>
            <person name="Sessa L."/>
            <person name="Sheng Y."/>
            <person name="Shibata Y."/>
            <person name="Shimada H."/>
            <person name="Shimada K."/>
            <person name="Silva D."/>
            <person name="Sinclair B."/>
            <person name="Sperling S."/>
            <person name="Stupka E."/>
            <person name="Sugiura K."/>
            <person name="Sultana R."/>
            <person name="Takenaka Y."/>
            <person name="Taki K."/>
            <person name="Tammoja K."/>
            <person name="Tan S.L."/>
            <person name="Tang S."/>
            <person name="Taylor M.S."/>
            <person name="Tegner J."/>
            <person name="Teichmann S.A."/>
            <person name="Ueda H.R."/>
            <person name="van Nimwegen E."/>
            <person name="Verardo R."/>
            <person name="Wei C.L."/>
            <person name="Yagi K."/>
            <person name="Yamanishi H."/>
            <person name="Zabarovsky E."/>
            <person name="Zhu S."/>
            <person name="Zimmer A."/>
            <person name="Hide W."/>
            <person name="Bult C."/>
            <person name="Grimmond S.M."/>
            <person name="Teasdale R.D."/>
            <person name="Liu E.T."/>
            <person name="Brusic V."/>
            <person name="Quackenbush J."/>
            <person name="Wahlestedt C."/>
            <person name="Mattick J.S."/>
            <person name="Hume D.A."/>
            <person name="Kai C."/>
            <person name="Sasaki D."/>
            <person name="Tomaru Y."/>
            <person name="Fukuda S."/>
            <person name="Kanamori-Katayama M."/>
            <person name="Suzuki M."/>
            <person name="Aoki J."/>
            <person name="Arakawa T."/>
            <person name="Iida J."/>
            <person name="Imamura K."/>
            <person name="Itoh M."/>
            <person name="Kato T."/>
            <person name="Kawaji H."/>
            <person name="Kawagashira N."/>
            <person name="Kawashima T."/>
            <person name="Kojima M."/>
            <person name="Kondo S."/>
            <person name="Konno H."/>
            <person name="Nakano K."/>
            <person name="Ninomiya N."/>
            <person name="Nishio T."/>
            <person name="Okada M."/>
            <person name="Plessy C."/>
            <person name="Shibata K."/>
            <person name="Shiraki T."/>
            <person name="Suzuki S."/>
            <person name="Tagami M."/>
            <person name="Waki K."/>
            <person name="Watahiki A."/>
            <person name="Okamura-Oho Y."/>
            <person name="Suzuki H."/>
            <person name="Kawai J."/>
            <person name="Hayashizaki Y."/>
        </authorList>
    </citation>
    <scope>NUCLEOTIDE SEQUENCE [LARGE SCALE MRNA]</scope>
    <source>
        <strain>C57BL/6J</strain>
        <tissue>Head</tissue>
        <tissue>Testis</tissue>
    </source>
</reference>
<reference key="2">
    <citation type="journal article" date="2004" name="Genome Res.">
        <title>The status, quality, and expansion of the NIH full-length cDNA project: the Mammalian Gene Collection (MGC).</title>
        <authorList>
            <consortium name="The MGC Project Team"/>
        </authorList>
    </citation>
    <scope>NUCLEOTIDE SEQUENCE [LARGE SCALE MRNA]</scope>
    <source>
        <tissue>Pituitary</tissue>
    </source>
</reference>
<reference key="3">
    <citation type="journal article" date="2010" name="Cell">
        <title>A tissue-specific atlas of mouse protein phosphorylation and expression.</title>
        <authorList>
            <person name="Huttlin E.L."/>
            <person name="Jedrychowski M.P."/>
            <person name="Elias J.E."/>
            <person name="Goswami T."/>
            <person name="Rad R."/>
            <person name="Beausoleil S.A."/>
            <person name="Villen J."/>
            <person name="Haas W."/>
            <person name="Sowa M.E."/>
            <person name="Gygi S.P."/>
        </authorList>
    </citation>
    <scope>IDENTIFICATION BY MASS SPECTROMETRY [LARGE SCALE ANALYSIS]</scope>
    <source>
        <tissue>Kidney</tissue>
        <tissue>Liver</tissue>
        <tissue>Testis</tissue>
    </source>
</reference>
<dbReference type="EMBL" id="AK029465">
    <property type="protein sequence ID" value="BAC26462.1"/>
    <property type="molecule type" value="mRNA"/>
</dbReference>
<dbReference type="EMBL" id="AK033167">
    <property type="protein sequence ID" value="BAC28180.1"/>
    <property type="molecule type" value="mRNA"/>
</dbReference>
<dbReference type="EMBL" id="AK133986">
    <property type="protein sequence ID" value="BAE21969.1"/>
    <property type="molecule type" value="mRNA"/>
</dbReference>
<dbReference type="EMBL" id="BC087903">
    <property type="protein sequence ID" value="AAH87903.1"/>
    <property type="molecule type" value="mRNA"/>
</dbReference>
<dbReference type="EMBL" id="BC107356">
    <property type="protein sequence ID" value="AAI07357.1"/>
    <property type="molecule type" value="mRNA"/>
</dbReference>
<dbReference type="CCDS" id="CCDS17345.1"/>
<dbReference type="RefSeq" id="NP_766089.1">
    <property type="nucleotide sequence ID" value="NM_172501.2"/>
</dbReference>
<dbReference type="SMR" id="Q8CCH2"/>
<dbReference type="FunCoup" id="Q8CCH2">
    <property type="interactions" value="1411"/>
</dbReference>
<dbReference type="STRING" id="10090.ENSMUSP00000055295"/>
<dbReference type="GlyCosmos" id="Q8CCH2">
    <property type="glycosylation" value="3 sites, No reported glycans"/>
</dbReference>
<dbReference type="GlyGen" id="Q8CCH2">
    <property type="glycosylation" value="3 sites, 1 N-linked glycan (1 site)"/>
</dbReference>
<dbReference type="PhosphoSitePlus" id="Q8CCH2"/>
<dbReference type="SwissPalm" id="Q8CCH2"/>
<dbReference type="jPOST" id="Q8CCH2"/>
<dbReference type="PaxDb" id="10090-ENSMUSP00000055295"/>
<dbReference type="PeptideAtlas" id="Q8CCH2"/>
<dbReference type="ProteomicsDB" id="293654"/>
<dbReference type="Pumba" id="Q8CCH2"/>
<dbReference type="Antibodypedia" id="2743">
    <property type="antibodies" value="92 antibodies from 16 providers"/>
</dbReference>
<dbReference type="DNASU" id="212114"/>
<dbReference type="Ensembl" id="ENSMUST00000056749.14">
    <property type="protein sequence ID" value="ENSMUSP00000055295.8"/>
    <property type="gene ID" value="ENSMUSG00000042997.14"/>
</dbReference>
<dbReference type="GeneID" id="212114"/>
<dbReference type="KEGG" id="mmu:212114"/>
<dbReference type="UCSC" id="uc008per.1">
    <property type="organism name" value="mouse"/>
</dbReference>
<dbReference type="AGR" id="MGI:2444520"/>
<dbReference type="CTD" id="387921"/>
<dbReference type="MGI" id="MGI:2444520">
    <property type="gene designation" value="Nhlrc3"/>
</dbReference>
<dbReference type="VEuPathDB" id="HostDB:ENSMUSG00000042997"/>
<dbReference type="eggNOG" id="KOG2177">
    <property type="taxonomic scope" value="Eukaryota"/>
</dbReference>
<dbReference type="GeneTree" id="ENSGT00390000008657"/>
<dbReference type="HOGENOM" id="CLU_037899_2_0_1"/>
<dbReference type="InParanoid" id="Q8CCH2"/>
<dbReference type="OMA" id="GDFLMSW"/>
<dbReference type="OrthoDB" id="10044505at2759"/>
<dbReference type="PhylomeDB" id="Q8CCH2"/>
<dbReference type="TreeFam" id="TF331018"/>
<dbReference type="Reactome" id="R-MMU-6798695">
    <property type="pathway name" value="Neutrophil degranulation"/>
</dbReference>
<dbReference type="BioGRID-ORCS" id="212114">
    <property type="hits" value="3 hits in 76 CRISPR screens"/>
</dbReference>
<dbReference type="ChiTaRS" id="Nhlrc3">
    <property type="organism name" value="mouse"/>
</dbReference>
<dbReference type="PRO" id="PR:Q8CCH2"/>
<dbReference type="Proteomes" id="UP000000589">
    <property type="component" value="Chromosome 3"/>
</dbReference>
<dbReference type="RNAct" id="Q8CCH2">
    <property type="molecule type" value="protein"/>
</dbReference>
<dbReference type="Bgee" id="ENSMUSG00000042997">
    <property type="expression patterns" value="Expressed in ear vesicle and 223 other cell types or tissues"/>
</dbReference>
<dbReference type="ExpressionAtlas" id="Q8CCH2">
    <property type="expression patterns" value="baseline and differential"/>
</dbReference>
<dbReference type="FunFam" id="2.120.10.30:FF:000043">
    <property type="entry name" value="NHL repeat containing 3"/>
    <property type="match status" value="1"/>
</dbReference>
<dbReference type="Gene3D" id="2.120.10.30">
    <property type="entry name" value="TolB, C-terminal domain"/>
    <property type="match status" value="1"/>
</dbReference>
<dbReference type="InterPro" id="IPR011042">
    <property type="entry name" value="6-blade_b-propeller_TolB-like"/>
</dbReference>
<dbReference type="InterPro" id="IPR001258">
    <property type="entry name" value="NHL_repeat"/>
</dbReference>
<dbReference type="InterPro" id="IPR050952">
    <property type="entry name" value="TRIM-NHL_E3_ligases"/>
</dbReference>
<dbReference type="PANTHER" id="PTHR24104">
    <property type="entry name" value="E3 UBIQUITIN-PROTEIN LIGASE NHLRC1-RELATED"/>
    <property type="match status" value="1"/>
</dbReference>
<dbReference type="PANTHER" id="PTHR24104:SF31">
    <property type="entry name" value="NHL REPEAT-CONTAINING PROTEIN 3"/>
    <property type="match status" value="1"/>
</dbReference>
<dbReference type="Pfam" id="PF01436">
    <property type="entry name" value="NHL"/>
    <property type="match status" value="1"/>
</dbReference>
<dbReference type="SUPFAM" id="SSF101898">
    <property type="entry name" value="NHL repeat"/>
    <property type="match status" value="1"/>
</dbReference>
<dbReference type="PROSITE" id="PS51125">
    <property type="entry name" value="NHL"/>
    <property type="match status" value="4"/>
</dbReference>
<protein>
    <recommendedName>
        <fullName>NHL repeat-containing protein 3</fullName>
    </recommendedName>
</protein>
<sequence>MARAWVCLAGAAFFLSCLVLHSRFCGSLVSRTFSFHVSWRMEDPLFRLDLGWPKNSEYFTGATFCVAVDSLNGLVYVAQRGDNIPKVLVFSEDGYFLRAWNYTVDTPHGMFVSGTPFEQSVWITDVGSGPYGHTVKKYNSLGDLVQVLGTPGKKGTGLNPLQFDNPAELYVDDTGEMYIVDGDGGLNNRLVKLSQDFMILWLRGENGTGPAKFNIPHSVTLDAVGRVWVADRGNKRLQVFDKDTGEWLGAWDNCFTEEGPSAVRFTPDGKYLIVAQLNLSRLSVLLAPPSGSIGDCSVVSTIQLADQVLPHLLEVDRKTGAVYVAEIGAKQIQKYIPWHSRTPAFGA</sequence>
<keyword id="KW-0325">Glycoprotein</keyword>
<keyword id="KW-1185">Reference proteome</keyword>
<keyword id="KW-0677">Repeat</keyword>
<keyword id="KW-0732">Signal</keyword>
<accession>Q8CCH2</accession>
<accession>Q8CDW5</accession>
<feature type="signal peptide" evidence="1">
    <location>
        <begin position="1"/>
        <end position="22"/>
    </location>
</feature>
<feature type="chain" id="PRO_0000317195" description="NHL repeat-containing protein 3">
    <location>
        <begin position="23"/>
        <end position="347"/>
    </location>
</feature>
<feature type="repeat" description="NHL 1">
    <location>
        <begin position="47"/>
        <end position="93"/>
    </location>
</feature>
<feature type="repeat" description="NHL 2">
    <location>
        <begin position="150"/>
        <end position="196"/>
    </location>
</feature>
<feature type="repeat" description="NHL 3">
    <location>
        <begin position="200"/>
        <end position="243"/>
    </location>
</feature>
<feature type="repeat" description="NHL 4">
    <location>
        <begin position="294"/>
        <end position="338"/>
    </location>
</feature>
<feature type="glycosylation site" description="N-linked (GlcNAc...) asparagine" evidence="1">
    <location>
        <position position="101"/>
    </location>
</feature>
<feature type="glycosylation site" description="N-linked (GlcNAc...) asparagine" evidence="1">
    <location>
        <position position="206"/>
    </location>
</feature>
<feature type="glycosylation site" description="N-linked (GlcNAc...) asparagine" evidence="1">
    <location>
        <position position="278"/>
    </location>
</feature>
<evidence type="ECO:0000255" key="1"/>
<gene>
    <name type="primary">Nhlrc3</name>
</gene>
<name>NHLC3_MOUSE</name>
<organism>
    <name type="scientific">Mus musculus</name>
    <name type="common">Mouse</name>
    <dbReference type="NCBI Taxonomy" id="10090"/>
    <lineage>
        <taxon>Eukaryota</taxon>
        <taxon>Metazoa</taxon>
        <taxon>Chordata</taxon>
        <taxon>Craniata</taxon>
        <taxon>Vertebrata</taxon>
        <taxon>Euteleostomi</taxon>
        <taxon>Mammalia</taxon>
        <taxon>Eutheria</taxon>
        <taxon>Euarchontoglires</taxon>
        <taxon>Glires</taxon>
        <taxon>Rodentia</taxon>
        <taxon>Myomorpha</taxon>
        <taxon>Muroidea</taxon>
        <taxon>Muridae</taxon>
        <taxon>Murinae</taxon>
        <taxon>Mus</taxon>
        <taxon>Mus</taxon>
    </lineage>
</organism>
<proteinExistence type="evidence at protein level"/>